<proteinExistence type="inferred from homology"/>
<evidence type="ECO:0000250" key="1">
    <source>
        <dbReference type="UniProtKB" id="P37128"/>
    </source>
</evidence>
<evidence type="ECO:0000255" key="2">
    <source>
        <dbReference type="PROSITE-ProRule" id="PRU00794"/>
    </source>
</evidence>
<evidence type="ECO:0000305" key="3"/>
<keyword id="KW-0378">Hydrolase</keyword>
<keyword id="KW-0460">Magnesium</keyword>
<keyword id="KW-0479">Metal-binding</keyword>
<dbReference type="EC" id="3.6.1.-" evidence="1"/>
<dbReference type="EMBL" id="CP000950">
    <property type="protein sequence ID" value="ACA67684.1"/>
    <property type="molecule type" value="Genomic_DNA"/>
</dbReference>
<dbReference type="RefSeq" id="WP_002208529.1">
    <property type="nucleotide sequence ID" value="NZ_CP009792.1"/>
</dbReference>
<dbReference type="SMR" id="B1JSJ3"/>
<dbReference type="GeneID" id="57975667"/>
<dbReference type="KEGG" id="ypy:YPK_1390"/>
<dbReference type="PATRIC" id="fig|502800.11.peg.2027"/>
<dbReference type="GO" id="GO:0005829">
    <property type="term" value="C:cytosol"/>
    <property type="evidence" value="ECO:0007669"/>
    <property type="project" value="TreeGrafter"/>
</dbReference>
<dbReference type="GO" id="GO:0016818">
    <property type="term" value="F:hydrolase activity, acting on acid anhydrides, in phosphorus-containing anhydrides"/>
    <property type="evidence" value="ECO:0007669"/>
    <property type="project" value="InterPro"/>
</dbReference>
<dbReference type="GO" id="GO:0046872">
    <property type="term" value="F:metal ion binding"/>
    <property type="evidence" value="ECO:0007669"/>
    <property type="project" value="UniProtKB-KW"/>
</dbReference>
<dbReference type="GO" id="GO:0006753">
    <property type="term" value="P:nucleoside phosphate metabolic process"/>
    <property type="evidence" value="ECO:0007669"/>
    <property type="project" value="TreeGrafter"/>
</dbReference>
<dbReference type="GO" id="GO:0019693">
    <property type="term" value="P:ribose phosphate metabolic process"/>
    <property type="evidence" value="ECO:0007669"/>
    <property type="project" value="TreeGrafter"/>
</dbReference>
<dbReference type="CDD" id="cd24157">
    <property type="entry name" value="NUDIX_GDPMK"/>
    <property type="match status" value="1"/>
</dbReference>
<dbReference type="FunFam" id="3.90.79.10:FF:000010">
    <property type="entry name" value="GDP-mannose pyrophosphatase NudK"/>
    <property type="match status" value="1"/>
</dbReference>
<dbReference type="Gene3D" id="3.90.79.10">
    <property type="entry name" value="Nucleoside Triphosphate Pyrophosphohydrolase"/>
    <property type="match status" value="1"/>
</dbReference>
<dbReference type="InterPro" id="IPR004385">
    <property type="entry name" value="NDP_pyrophosphatase"/>
</dbReference>
<dbReference type="InterPro" id="IPR015797">
    <property type="entry name" value="NUDIX_hydrolase-like_dom_sf"/>
</dbReference>
<dbReference type="InterPro" id="IPR000086">
    <property type="entry name" value="NUDIX_hydrolase_dom"/>
</dbReference>
<dbReference type="NCBIfam" id="TIGR00052">
    <property type="entry name" value="nudix-type nucleoside diphosphatase, YffH/AdpP family"/>
    <property type="match status" value="1"/>
</dbReference>
<dbReference type="NCBIfam" id="NF011585">
    <property type="entry name" value="PRK15009.1"/>
    <property type="match status" value="1"/>
</dbReference>
<dbReference type="PANTHER" id="PTHR11839:SF18">
    <property type="entry name" value="NUDIX HYDROLASE DOMAIN-CONTAINING PROTEIN"/>
    <property type="match status" value="1"/>
</dbReference>
<dbReference type="PANTHER" id="PTHR11839">
    <property type="entry name" value="UDP/ADP-SUGAR PYROPHOSPHATASE"/>
    <property type="match status" value="1"/>
</dbReference>
<dbReference type="Pfam" id="PF00293">
    <property type="entry name" value="NUDIX"/>
    <property type="match status" value="1"/>
</dbReference>
<dbReference type="SUPFAM" id="SSF55811">
    <property type="entry name" value="Nudix"/>
    <property type="match status" value="1"/>
</dbReference>
<dbReference type="PROSITE" id="PS51462">
    <property type="entry name" value="NUDIX"/>
    <property type="match status" value="1"/>
</dbReference>
<sequence length="198" mass="22472">MSVKIENIQCELLSKNWFKLHKYTFDLKTDEGTSVQQIREVYDRGNGATILLYNRQQGTVVLIEQFRMPTYVNGNASGMLLEACAGLLDNDSPEACIRREAMEETGYQVDKVQKLFEAYMSPGGVTELVYFFAAEYHPDQKITDEVGVEDEVIEVVELPFHDALAMVADGRIKDGKTIMLLQYAQIHFFPSSLTPQRC</sequence>
<comment type="function">
    <text evidence="1">Nucleoside diphosphate sugar hydrolase that hydrolyzes GDP-mannose as its preferred substrate, yielding GMP and mannose-1-phosphate.</text>
</comment>
<comment type="catalytic activity">
    <reaction evidence="1">
        <text>GDP-alpha-D-mannose + H2O = alpha-D-mannose 1-phosphate + GMP + 2 H(+)</text>
        <dbReference type="Rhea" id="RHEA:27978"/>
        <dbReference type="ChEBI" id="CHEBI:15377"/>
        <dbReference type="ChEBI" id="CHEBI:15378"/>
        <dbReference type="ChEBI" id="CHEBI:57527"/>
        <dbReference type="ChEBI" id="CHEBI:58115"/>
        <dbReference type="ChEBI" id="CHEBI:58409"/>
    </reaction>
</comment>
<comment type="cofactor">
    <cofactor evidence="1">
        <name>Mg(2+)</name>
        <dbReference type="ChEBI" id="CHEBI:18420"/>
    </cofactor>
</comment>
<comment type="subunit">
    <text evidence="1">Homodimer.</text>
</comment>
<comment type="domain">
    <text evidence="1">In the dimer, the N-terminal domains are swapped between the two monomers, such that residues of both chains contribute to the active site.</text>
</comment>
<comment type="similarity">
    <text evidence="3">Belongs to the Nudix hydrolase family. NudK subfamily.</text>
</comment>
<name>NUDK_YERPY</name>
<organism>
    <name type="scientific">Yersinia pseudotuberculosis serotype O:3 (strain YPIII)</name>
    <dbReference type="NCBI Taxonomy" id="502800"/>
    <lineage>
        <taxon>Bacteria</taxon>
        <taxon>Pseudomonadati</taxon>
        <taxon>Pseudomonadota</taxon>
        <taxon>Gammaproteobacteria</taxon>
        <taxon>Enterobacterales</taxon>
        <taxon>Yersiniaceae</taxon>
        <taxon>Yersinia</taxon>
    </lineage>
</organism>
<accession>B1JSJ3</accession>
<reference key="1">
    <citation type="submission" date="2008-02" db="EMBL/GenBank/DDBJ databases">
        <title>Complete sequence of Yersinia pseudotuberculosis YPIII.</title>
        <authorList>
            <consortium name="US DOE Joint Genome Institute"/>
            <person name="Copeland A."/>
            <person name="Lucas S."/>
            <person name="Lapidus A."/>
            <person name="Glavina del Rio T."/>
            <person name="Dalin E."/>
            <person name="Tice H."/>
            <person name="Bruce D."/>
            <person name="Goodwin L."/>
            <person name="Pitluck S."/>
            <person name="Munk A.C."/>
            <person name="Brettin T."/>
            <person name="Detter J.C."/>
            <person name="Han C."/>
            <person name="Tapia R."/>
            <person name="Schmutz J."/>
            <person name="Larimer F."/>
            <person name="Land M."/>
            <person name="Hauser L."/>
            <person name="Challacombe J.F."/>
            <person name="Green L."/>
            <person name="Lindler L.E."/>
            <person name="Nikolich M.P."/>
            <person name="Richardson P."/>
        </authorList>
    </citation>
    <scope>NUCLEOTIDE SEQUENCE [LARGE SCALE GENOMIC DNA]</scope>
    <source>
        <strain>YPIII</strain>
    </source>
</reference>
<protein>
    <recommendedName>
        <fullName>GDP-mannose pyrophosphatase</fullName>
        <ecNumber evidence="1">3.6.1.-</ecNumber>
    </recommendedName>
    <alternativeName>
        <fullName>GDP-mannose hydrolase</fullName>
    </alternativeName>
    <alternativeName>
        <fullName>GDPMK</fullName>
    </alternativeName>
</protein>
<feature type="chain" id="PRO_0000342511" description="GDP-mannose pyrophosphatase">
    <location>
        <begin position="1"/>
        <end position="198"/>
    </location>
</feature>
<feature type="domain" description="Nudix hydrolase" evidence="2">
    <location>
        <begin position="43"/>
        <end position="180"/>
    </location>
</feature>
<feature type="short sequence motif" description="Nudix box">
    <location>
        <begin position="86"/>
        <end position="106"/>
    </location>
</feature>
<feature type="binding site" evidence="1">
    <location>
        <begin position="38"/>
        <end position="40"/>
    </location>
    <ligand>
        <name>GDP-alpha-D-mannose</name>
        <dbReference type="ChEBI" id="CHEBI:57527"/>
        <note>ligand shared between dimeric partners</note>
    </ligand>
</feature>
<feature type="binding site" description="in other chain" evidence="1">
    <location>
        <position position="67"/>
    </location>
    <ligand>
        <name>GDP-alpha-D-mannose</name>
        <dbReference type="ChEBI" id="CHEBI:57527"/>
        <note>ligand shared between dimeric partners</note>
    </ligand>
</feature>
<feature type="binding site" description="in other chain" evidence="1">
    <location>
        <begin position="85"/>
        <end position="87"/>
    </location>
    <ligand>
        <name>GDP-alpha-D-mannose</name>
        <dbReference type="ChEBI" id="CHEBI:57527"/>
        <note>ligand shared between dimeric partners</note>
    </ligand>
</feature>
<feature type="binding site" evidence="1">
    <location>
        <position position="85"/>
    </location>
    <ligand>
        <name>Mg(2+)</name>
        <dbReference type="ChEBI" id="CHEBI:18420"/>
        <label>1</label>
    </ligand>
</feature>
<feature type="binding site" evidence="1">
    <location>
        <position position="100"/>
    </location>
    <ligand>
        <name>Mg(2+)</name>
        <dbReference type="ChEBI" id="CHEBI:18420"/>
        <label>2</label>
    </ligand>
</feature>
<feature type="binding site" description="in other chain" evidence="1">
    <location>
        <position position="104"/>
    </location>
    <ligand>
        <name>GDP-alpha-D-mannose</name>
        <dbReference type="ChEBI" id="CHEBI:57527"/>
        <note>ligand shared between dimeric partners</note>
    </ligand>
</feature>
<feature type="binding site" evidence="1">
    <location>
        <position position="104"/>
    </location>
    <ligand>
        <name>Mg(2+)</name>
        <dbReference type="ChEBI" id="CHEBI:18420"/>
        <label>1</label>
    </ligand>
</feature>
<feature type="binding site" evidence="1">
    <location>
        <position position="104"/>
    </location>
    <ligand>
        <name>Mg(2+)</name>
        <dbReference type="ChEBI" id="CHEBI:18420"/>
        <label>2</label>
    </ligand>
</feature>
<feature type="binding site" description="in other chain" evidence="1">
    <location>
        <position position="127"/>
    </location>
    <ligand>
        <name>GDP-alpha-D-mannose</name>
        <dbReference type="ChEBI" id="CHEBI:57527"/>
        <note>ligand shared between dimeric partners</note>
    </ligand>
</feature>
<feature type="binding site" description="in other chain" evidence="1">
    <location>
        <begin position="150"/>
        <end position="151"/>
    </location>
    <ligand>
        <name>GDP-alpha-D-mannose</name>
        <dbReference type="ChEBI" id="CHEBI:57527"/>
        <note>ligand shared between dimeric partners</note>
    </ligand>
</feature>
<feature type="binding site" evidence="1">
    <location>
        <position position="151"/>
    </location>
    <ligand>
        <name>Mg(2+)</name>
        <dbReference type="ChEBI" id="CHEBI:18420"/>
        <label>2</label>
    </ligand>
</feature>
<feature type="binding site" description="in other chain" evidence="1">
    <location>
        <position position="176"/>
    </location>
    <ligand>
        <name>GDP-alpha-D-mannose</name>
        <dbReference type="ChEBI" id="CHEBI:57527"/>
        <note>ligand shared between dimeric partners</note>
    </ligand>
</feature>
<gene>
    <name type="primary">nudK</name>
    <name type="ordered locus">YPK_1390</name>
</gene>